<name>ODO1_ECOLI</name>
<sequence length="933" mass="105062">MQNSALKAWLDSSYLSGANQSWIEQLYEDFLTDPDSVDANWRSTFQQLPGTGVKPDQFHSQTREYFRRLAKDASRYSSTISDPDTNVKQVKVLQLINAYRFRGHQHANLDPLGLWQQDKVADLDPSFHDLTEADFQETFNVGSFASGKETMKLGELLEALKQTYCGPIGAEYMHITSTEEKRWIQQRIESGRATFNSEEKKRFLSELTAAEGLERYLGAKFPGAKRFSLEGGDALIPMLKEMIRHAGNSGTREVVLGMAHRGRLNVLVNVLGKKPQDLFDEFAGKHKEHLGTGDVKYHMGFSSDFQTDGGLVHLALAFNPSHLEIVSPVVIGSVRARLDRLDEPSSNKVLPITIHGDAAVTGQGVVQETLNMSKARGYEVGGTVRIVINNQVGFTTSNPLDARSTPYCTDIGKMVQAPIFHVNADDPEAVAFVTRLALDFRNTFKRDVFIDLVCYRRHGHNEADEPSATQPLMYQKIKKHPTPRKIYADKLEQEKVATLEDATEMVNLYRDALDAGDCVVAEWRPMNMHSFTWSPYLNHEWDEEYPNKVEMKRLQELAKRISTVPEAVEMQSRVAKIYGDRQAMAAGEKLFDWGGAENLAYATLVDEGIPVRLSGEDSGRGTFFHRHAVIHNQSNGSTYTPLQHIHNGQGAFRVWDSVLSEEAVLAFEYGYATAEPRTLTIWEAQFGDFANGAQVVIDQFISSGEQKWGRMCGLVMLLPHGYEGQGPEHSSARLERYLQLCAEQNMQVCVPSTPAQVYHMLRRQALRGMRRPLVVMSPKSLLRHPLAVSSLEELANGTFLPAIGEIDELDPKGVKRVVMCSGKVYYDLLEQRRKNNQHDVAIVRIEQLYPFPHKAMQEVLQQFAHVKDFVWCQEEPLNQGAWYCSQHHFREVIPFGASLRYAGRPASASPAVGYMSVHQKQQQDLVNDALNVE</sequence>
<keyword id="KW-0002">3D-structure</keyword>
<keyword id="KW-0547">Nucleotide-binding</keyword>
<keyword id="KW-0560">Oxidoreductase</keyword>
<keyword id="KW-0597">Phosphoprotein</keyword>
<keyword id="KW-1185">Reference proteome</keyword>
<keyword id="KW-0786">Thiamine pyrophosphate</keyword>
<keyword id="KW-0816">Tricarboxylic acid cycle</keyword>
<feature type="chain" id="PRO_0000162191" description="2-oxoglutarate dehydrogenase E1 component">
    <location>
        <begin position="1"/>
        <end position="933"/>
    </location>
</feature>
<feature type="modified residue" description="O-AMP-threonine; by ydiU" evidence="2">
    <location>
        <position position="405"/>
    </location>
</feature>
<feature type="mutagenesis site" description="Loss of catalytic activity." evidence="1">
    <original>H</original>
    <variation>A</variation>
    <location>
        <position position="260"/>
    </location>
</feature>
<feature type="mutagenesis site" description="Loss of catalytic activity." evidence="1">
    <original>H</original>
    <variation>A</variation>
    <location>
        <position position="298"/>
    </location>
</feature>
<feature type="mutagenesis site" description="Mild reduction in growth in presence of acetate or glucose as sole source of carbon; when associated with A-337." evidence="1">
    <original>H</original>
    <variation>A</variation>
    <location>
        <position position="313"/>
    </location>
</feature>
<feature type="mutagenesis site" description="No growth defect in presence of acetate or glucose as sole source of carbon." evidence="1">
    <original>H</original>
    <variation>Q</variation>
    <location>
        <position position="313"/>
    </location>
</feature>
<feature type="mutagenesis site" description="Mild reduction in growth in presence of acetate or glucose as sole source of carbon; when associated with A-313." evidence="1">
    <original>R</original>
    <variation>A</variation>
    <location>
        <position position="337"/>
    </location>
</feature>
<feature type="mutagenesis site" description="No loss of AMPylation by YdiU." evidence="2">
    <original>S</original>
    <variation>A</variation>
    <location>
        <position position="404"/>
    </location>
</feature>
<feature type="mutagenesis site" description="Severe reduction in AMPylation by YdiU." evidence="2">
    <original>T</original>
    <variation>A</variation>
    <location>
        <position position="405"/>
    </location>
</feature>
<feature type="mutagenesis site" description="Mild reduction in growth in presence of acetate or glucose as sole source of carbon; when associated with A-710." evidence="1">
    <original>W</original>
    <variation>A</variation>
    <location>
        <position position="533"/>
    </location>
</feature>
<feature type="mutagenesis site" description="No growth defect in presence of acetate or glucose as sole source of carbon." evidence="1">
    <original>W</original>
    <variation>I</variation>
    <location>
        <position position="533"/>
    </location>
</feature>
<feature type="mutagenesis site" description="Mild reduction in growth in presence of acetate or glucose as sole source of carbon; when associated with A-533." evidence="1">
    <original>R</original>
    <variation>A</variation>
    <location>
        <position position="710"/>
    </location>
</feature>
<feature type="sequence conflict" description="In Ref. 1; AAA23897/CAA25280." evidence="3" ref="1">
    <original>C</original>
    <variation>S</variation>
    <location>
        <position position="454"/>
    </location>
</feature>
<feature type="helix" evidence="5">
    <location>
        <begin position="85"/>
        <end position="102"/>
    </location>
</feature>
<feature type="helix" evidence="5">
    <location>
        <begin position="103"/>
        <end position="106"/>
    </location>
</feature>
<feature type="strand" evidence="5">
    <location>
        <begin position="111"/>
        <end position="113"/>
    </location>
</feature>
<feature type="helix" evidence="5">
    <location>
        <begin position="121"/>
        <end position="123"/>
    </location>
</feature>
<feature type="helix" evidence="5">
    <location>
        <begin position="126"/>
        <end position="129"/>
    </location>
</feature>
<feature type="helix" evidence="5">
    <location>
        <begin position="132"/>
        <end position="136"/>
    </location>
</feature>
<feature type="strand" evidence="5">
    <location>
        <begin position="137"/>
        <end position="140"/>
    </location>
</feature>
<feature type="strand" evidence="5">
    <location>
        <begin position="150"/>
        <end position="152"/>
    </location>
</feature>
<feature type="helix" evidence="5">
    <location>
        <begin position="153"/>
        <end position="165"/>
    </location>
</feature>
<feature type="strand" evidence="5">
    <location>
        <begin position="166"/>
        <end position="171"/>
    </location>
</feature>
<feature type="helix" evidence="5">
    <location>
        <begin position="178"/>
        <end position="188"/>
    </location>
</feature>
<feature type="helix" evidence="5">
    <location>
        <begin position="197"/>
        <end position="220"/>
    </location>
</feature>
<feature type="helix" evidence="5">
    <location>
        <begin position="235"/>
        <end position="247"/>
    </location>
</feature>
<feature type="turn" evidence="5">
    <location>
        <begin position="248"/>
        <end position="250"/>
    </location>
</feature>
<feature type="strand" evidence="5">
    <location>
        <begin position="253"/>
        <end position="257"/>
    </location>
</feature>
<feature type="helix" evidence="5">
    <location>
        <begin position="263"/>
        <end position="269"/>
    </location>
</feature>
<feature type="helix" evidence="5">
    <location>
        <begin position="275"/>
        <end position="282"/>
    </location>
</feature>
<feature type="helix" evidence="5">
    <location>
        <begin position="296"/>
        <end position="298"/>
    </location>
</feature>
<feature type="strand" evidence="5">
    <location>
        <begin position="301"/>
        <end position="307"/>
    </location>
</feature>
<feature type="strand" evidence="5">
    <location>
        <begin position="310"/>
        <end position="316"/>
    </location>
</feature>
<feature type="strand" evidence="5">
    <location>
        <begin position="321"/>
        <end position="324"/>
    </location>
</feature>
<feature type="helix" evidence="5">
    <location>
        <begin position="326"/>
        <end position="338"/>
    </location>
</feature>
<feature type="strand" evidence="5">
    <location>
        <begin position="341"/>
        <end position="343"/>
    </location>
</feature>
<feature type="helix" evidence="5">
    <location>
        <begin position="346"/>
        <end position="348"/>
    </location>
</feature>
<feature type="strand" evidence="5">
    <location>
        <begin position="349"/>
        <end position="356"/>
    </location>
</feature>
<feature type="helix" evidence="5">
    <location>
        <begin position="357"/>
        <end position="362"/>
    </location>
</feature>
<feature type="helix" evidence="5">
    <location>
        <begin position="365"/>
        <end position="372"/>
    </location>
</feature>
<feature type="turn" evidence="5">
    <location>
        <begin position="376"/>
        <end position="378"/>
    </location>
</feature>
<feature type="strand" evidence="5">
    <location>
        <begin position="384"/>
        <end position="389"/>
    </location>
</feature>
<feature type="helix" evidence="5">
    <location>
        <begin position="408"/>
        <end position="413"/>
    </location>
</feature>
<feature type="turn" evidence="5">
    <location>
        <begin position="414"/>
        <end position="416"/>
    </location>
</feature>
<feature type="strand" evidence="5">
    <location>
        <begin position="419"/>
        <end position="423"/>
    </location>
</feature>
<feature type="helix" evidence="5">
    <location>
        <begin position="427"/>
        <end position="444"/>
    </location>
</feature>
<feature type="strand" evidence="5">
    <location>
        <begin position="448"/>
        <end position="453"/>
    </location>
</feature>
<feature type="helix" evidence="5">
    <location>
        <begin position="474"/>
        <end position="478"/>
    </location>
</feature>
<feature type="helix" evidence="5">
    <location>
        <begin position="483"/>
        <end position="492"/>
    </location>
</feature>
<feature type="turn" evidence="5">
    <location>
        <begin position="493"/>
        <end position="495"/>
    </location>
</feature>
<feature type="helix" evidence="5">
    <location>
        <begin position="499"/>
        <end position="515"/>
    </location>
</feature>
<feature type="helix" evidence="5">
    <location>
        <begin position="528"/>
        <end position="530"/>
    </location>
</feature>
<feature type="helix" evidence="5">
    <location>
        <begin position="534"/>
        <end position="536"/>
    </location>
</feature>
<feature type="helix" evidence="5">
    <location>
        <begin position="551"/>
        <end position="560"/>
    </location>
</feature>
<feature type="helix" evidence="5">
    <location>
        <begin position="572"/>
        <end position="585"/>
    </location>
</feature>
<feature type="helix" evidence="5">
    <location>
        <begin position="593"/>
        <end position="605"/>
    </location>
</feature>
<feature type="turn" evidence="5">
    <location>
        <begin position="606"/>
        <end position="608"/>
    </location>
</feature>
<feature type="strand" evidence="5">
    <location>
        <begin position="611"/>
        <end position="615"/>
    </location>
</feature>
<feature type="turn" evidence="5">
    <location>
        <begin position="616"/>
        <end position="620"/>
    </location>
</feature>
<feature type="strand" evidence="5">
    <location>
        <begin position="629"/>
        <end position="631"/>
    </location>
</feature>
<feature type="strand" evidence="5">
    <location>
        <begin position="633"/>
        <end position="636"/>
    </location>
</feature>
<feature type="helix" evidence="5">
    <location>
        <begin position="641"/>
        <end position="643"/>
    </location>
</feature>
<feature type="strand" evidence="5">
    <location>
        <begin position="652"/>
        <end position="655"/>
    </location>
</feature>
<feature type="helix" evidence="5">
    <location>
        <begin position="661"/>
        <end position="674"/>
    </location>
</feature>
<feature type="strand" evidence="5">
    <location>
        <begin position="678"/>
        <end position="683"/>
    </location>
</feature>
<feature type="helix" evidence="5">
    <location>
        <begin position="687"/>
        <end position="693"/>
    </location>
</feature>
<feature type="helix" evidence="5">
    <location>
        <begin position="694"/>
        <end position="699"/>
    </location>
</feature>
<feature type="turn" evidence="5">
    <location>
        <begin position="700"/>
        <end position="703"/>
    </location>
</feature>
<feature type="helix" evidence="5">
    <location>
        <begin position="704"/>
        <end position="708"/>
    </location>
</feature>
<feature type="strand" evidence="5">
    <location>
        <begin position="715"/>
        <end position="719"/>
    </location>
</feature>
<feature type="strand" evidence="5">
    <location>
        <begin position="723"/>
        <end position="725"/>
    </location>
</feature>
<feature type="helix" evidence="5">
    <location>
        <begin position="734"/>
        <end position="739"/>
    </location>
</feature>
<feature type="strand" evidence="5">
    <location>
        <begin position="747"/>
        <end position="749"/>
    </location>
</feature>
<feature type="helix" evidence="5">
    <location>
        <begin position="754"/>
        <end position="766"/>
    </location>
</feature>
<feature type="strand" evidence="5">
    <location>
        <begin position="773"/>
        <end position="777"/>
    </location>
</feature>
<feature type="helix" evidence="5">
    <location>
        <begin position="780"/>
        <end position="783"/>
    </location>
</feature>
<feature type="helix" evidence="5">
    <location>
        <begin position="791"/>
        <end position="796"/>
    </location>
</feature>
<feature type="strand" evidence="5">
    <location>
        <begin position="801"/>
        <end position="803"/>
    </location>
</feature>
<feature type="helix" evidence="5">
    <location>
        <begin position="811"/>
        <end position="813"/>
    </location>
</feature>
<feature type="strand" evidence="5">
    <location>
        <begin position="816"/>
        <end position="820"/>
    </location>
</feature>
<feature type="helix" evidence="5">
    <location>
        <begin position="824"/>
        <end position="834"/>
    </location>
</feature>
<feature type="strand" evidence="5">
    <location>
        <begin position="839"/>
        <end position="845"/>
    </location>
</feature>
<feature type="strand" evidence="5">
    <location>
        <begin position="847"/>
        <end position="850"/>
    </location>
</feature>
<feature type="helix" evidence="5">
    <location>
        <begin position="853"/>
        <end position="860"/>
    </location>
</feature>
<feature type="helix" evidence="5">
    <location>
        <begin position="861"/>
        <end position="863"/>
    </location>
</feature>
<feature type="strand" evidence="5">
    <location>
        <begin position="868"/>
        <end position="876"/>
    </location>
</feature>
<feature type="strand" evidence="5">
    <location>
        <begin position="879"/>
        <end position="881"/>
    </location>
</feature>
<feature type="helix" evidence="5">
    <location>
        <begin position="882"/>
        <end position="890"/>
    </location>
</feature>
<feature type="strand" evidence="5">
    <location>
        <begin position="898"/>
        <end position="904"/>
    </location>
</feature>
<feature type="strand" evidence="5">
    <location>
        <begin position="908"/>
        <end position="911"/>
    </location>
</feature>
<feature type="helix" evidence="5">
    <location>
        <begin position="915"/>
        <end position="930"/>
    </location>
</feature>
<proteinExistence type="evidence at protein level"/>
<gene>
    <name type="primary">sucA</name>
    <name type="ordered locus">b0726</name>
    <name type="ordered locus">JW0715</name>
</gene>
<evidence type="ECO:0000269" key="1">
    <source>
    </source>
</evidence>
<evidence type="ECO:0000269" key="2">
    <source>
    </source>
</evidence>
<evidence type="ECO:0000305" key="3"/>
<evidence type="ECO:0000305" key="4">
    <source>
    </source>
</evidence>
<evidence type="ECO:0007829" key="5">
    <source>
        <dbReference type="PDB" id="2JGD"/>
    </source>
</evidence>
<organism>
    <name type="scientific">Escherichia coli (strain K12)</name>
    <dbReference type="NCBI Taxonomy" id="83333"/>
    <lineage>
        <taxon>Bacteria</taxon>
        <taxon>Pseudomonadati</taxon>
        <taxon>Pseudomonadota</taxon>
        <taxon>Gammaproteobacteria</taxon>
        <taxon>Enterobacterales</taxon>
        <taxon>Enterobacteriaceae</taxon>
        <taxon>Escherichia</taxon>
    </lineage>
</organism>
<dbReference type="EC" id="1.2.4.2" evidence="1"/>
<dbReference type="EMBL" id="J01619">
    <property type="protein sequence ID" value="AAA23897.1"/>
    <property type="molecule type" value="Genomic_DNA"/>
</dbReference>
<dbReference type="EMBL" id="X00661">
    <property type="protein sequence ID" value="CAA25280.1"/>
    <property type="molecule type" value="Genomic_DNA"/>
</dbReference>
<dbReference type="EMBL" id="U00096">
    <property type="protein sequence ID" value="AAC73820.1"/>
    <property type="molecule type" value="Genomic_DNA"/>
</dbReference>
<dbReference type="EMBL" id="AP009048">
    <property type="protein sequence ID" value="BAA35392.1"/>
    <property type="molecule type" value="Genomic_DNA"/>
</dbReference>
<dbReference type="PIR" id="E64808">
    <property type="entry name" value="DEECOG"/>
</dbReference>
<dbReference type="RefSeq" id="NP_415254.1">
    <property type="nucleotide sequence ID" value="NC_000913.3"/>
</dbReference>
<dbReference type="RefSeq" id="WP_001181473.1">
    <property type="nucleotide sequence ID" value="NZ_STEB01000035.1"/>
</dbReference>
<dbReference type="PDB" id="2JGD">
    <property type="method" value="X-ray"/>
    <property type="resolution" value="2.60 A"/>
    <property type="chains" value="A/B=1-933"/>
</dbReference>
<dbReference type="PDB" id="6VEF">
    <property type="method" value="EM"/>
    <property type="resolution" value="4.08 A"/>
    <property type="chains" value="A/B=84-933"/>
</dbReference>
<dbReference type="PDBsum" id="2JGD"/>
<dbReference type="PDBsum" id="6VEF"/>
<dbReference type="SMR" id="P0AFG3"/>
<dbReference type="BioGRID" id="4259944">
    <property type="interactions" value="3"/>
</dbReference>
<dbReference type="BioGRID" id="849680">
    <property type="interactions" value="3"/>
</dbReference>
<dbReference type="ComplexPortal" id="CPX-3921">
    <property type="entry name" value="2-oxoglutarate dehydrogenase complex"/>
</dbReference>
<dbReference type="DIP" id="DIP-36225N"/>
<dbReference type="FunCoup" id="P0AFG3">
    <property type="interactions" value="765"/>
</dbReference>
<dbReference type="IntAct" id="P0AFG3">
    <property type="interactions" value="13"/>
</dbReference>
<dbReference type="MINT" id="P0AFG3"/>
<dbReference type="STRING" id="511145.b0726"/>
<dbReference type="jPOST" id="P0AFG3"/>
<dbReference type="PaxDb" id="511145-b0726"/>
<dbReference type="EnsemblBacteria" id="AAC73820">
    <property type="protein sequence ID" value="AAC73820"/>
    <property type="gene ID" value="b0726"/>
</dbReference>
<dbReference type="GeneID" id="75205557"/>
<dbReference type="GeneID" id="945303"/>
<dbReference type="KEGG" id="ecj:JW0715"/>
<dbReference type="KEGG" id="eco:b0726"/>
<dbReference type="KEGG" id="ecoc:C3026_03635"/>
<dbReference type="PATRIC" id="fig|1411691.4.peg.1547"/>
<dbReference type="EchoBASE" id="EB0972"/>
<dbReference type="eggNOG" id="COG0567">
    <property type="taxonomic scope" value="Bacteria"/>
</dbReference>
<dbReference type="HOGENOM" id="CLU_004709_1_0_6"/>
<dbReference type="InParanoid" id="P0AFG3"/>
<dbReference type="OMA" id="RDSYCRT"/>
<dbReference type="OrthoDB" id="9759785at2"/>
<dbReference type="PhylomeDB" id="P0AFG3"/>
<dbReference type="BioCyc" id="EcoCyc:E1O-MONOMER"/>
<dbReference type="BioCyc" id="MetaCyc:E1O-MONOMER"/>
<dbReference type="BRENDA" id="1.2.1.105">
    <property type="organism ID" value="2026"/>
</dbReference>
<dbReference type="BRENDA" id="1.2.4.2">
    <property type="organism ID" value="2026"/>
</dbReference>
<dbReference type="BRENDA" id="2.2.1.5">
    <property type="organism ID" value="2026"/>
</dbReference>
<dbReference type="SABIO-RK" id="P0AFG3"/>
<dbReference type="EvolutionaryTrace" id="P0AFG3"/>
<dbReference type="PRO" id="PR:P0AFG3"/>
<dbReference type="Proteomes" id="UP000000625">
    <property type="component" value="Chromosome"/>
</dbReference>
<dbReference type="GO" id="GO:0005737">
    <property type="term" value="C:cytoplasm"/>
    <property type="evidence" value="ECO:0000314"/>
    <property type="project" value="ComplexPortal"/>
</dbReference>
<dbReference type="GO" id="GO:0005829">
    <property type="term" value="C:cytosol"/>
    <property type="evidence" value="ECO:0000314"/>
    <property type="project" value="EcoCyc"/>
</dbReference>
<dbReference type="GO" id="GO:0045252">
    <property type="term" value="C:oxoglutarate dehydrogenase complex"/>
    <property type="evidence" value="ECO:0000353"/>
    <property type="project" value="ComplexPortal"/>
</dbReference>
<dbReference type="GO" id="GO:0042802">
    <property type="term" value="F:identical protein binding"/>
    <property type="evidence" value="ECO:0000353"/>
    <property type="project" value="IntAct"/>
</dbReference>
<dbReference type="GO" id="GO:0000287">
    <property type="term" value="F:magnesium ion binding"/>
    <property type="evidence" value="ECO:0000314"/>
    <property type="project" value="EcoCyc"/>
</dbReference>
<dbReference type="GO" id="GO:0000166">
    <property type="term" value="F:nucleotide binding"/>
    <property type="evidence" value="ECO:0007669"/>
    <property type="project" value="UniProtKB-KW"/>
</dbReference>
<dbReference type="GO" id="GO:0004591">
    <property type="term" value="F:oxoglutarate dehydrogenase (succinyl-transferring) activity"/>
    <property type="evidence" value="ECO:0000314"/>
    <property type="project" value="EcoCyc"/>
</dbReference>
<dbReference type="GO" id="GO:0030976">
    <property type="term" value="F:thiamine pyrophosphate binding"/>
    <property type="evidence" value="ECO:0000314"/>
    <property type="project" value="EcoCyc"/>
</dbReference>
<dbReference type="GO" id="GO:0006099">
    <property type="term" value="P:tricarboxylic acid cycle"/>
    <property type="evidence" value="ECO:0000314"/>
    <property type="project" value="ComplexPortal"/>
</dbReference>
<dbReference type="CDD" id="cd02016">
    <property type="entry name" value="TPP_E1_OGDC_like"/>
    <property type="match status" value="1"/>
</dbReference>
<dbReference type="FunFam" id="1.10.287.1150:FF:000004">
    <property type="entry name" value="2-oxoglutarate dehydrogenase E1 component"/>
    <property type="match status" value="1"/>
</dbReference>
<dbReference type="FunFam" id="3.40.50.11610:FF:000001">
    <property type="entry name" value="2-oxoglutarate dehydrogenase E1 component"/>
    <property type="match status" value="1"/>
</dbReference>
<dbReference type="FunFam" id="3.40.50.12470:FF:000002">
    <property type="entry name" value="2-oxoglutarate dehydrogenase E1 component"/>
    <property type="match status" value="1"/>
</dbReference>
<dbReference type="FunFam" id="3.40.50.970:FF:000014">
    <property type="entry name" value="2-oxoglutarate dehydrogenase E1 component"/>
    <property type="match status" value="1"/>
</dbReference>
<dbReference type="Gene3D" id="3.40.50.12470">
    <property type="match status" value="1"/>
</dbReference>
<dbReference type="Gene3D" id="3.40.50.970">
    <property type="match status" value="1"/>
</dbReference>
<dbReference type="Gene3D" id="3.40.50.11610">
    <property type="entry name" value="Multifunctional 2-oxoglutarate metabolism enzyme, C-terminal domain"/>
    <property type="match status" value="1"/>
</dbReference>
<dbReference type="Gene3D" id="1.10.287.1150">
    <property type="entry name" value="TPP helical domain"/>
    <property type="match status" value="1"/>
</dbReference>
<dbReference type="InterPro" id="IPR032106">
    <property type="entry name" value="2-oxogl_dehyd_N"/>
</dbReference>
<dbReference type="InterPro" id="IPR011603">
    <property type="entry name" value="2oxoglutarate_DH_E1"/>
</dbReference>
<dbReference type="InterPro" id="IPR001017">
    <property type="entry name" value="DH_E1"/>
</dbReference>
<dbReference type="InterPro" id="IPR042179">
    <property type="entry name" value="KGD_C_sf"/>
</dbReference>
<dbReference type="InterPro" id="IPR031717">
    <property type="entry name" value="ODO-1/KGD_C"/>
</dbReference>
<dbReference type="InterPro" id="IPR029061">
    <property type="entry name" value="THDP-binding"/>
</dbReference>
<dbReference type="InterPro" id="IPR005475">
    <property type="entry name" value="Transketolase-like_Pyr-bd"/>
</dbReference>
<dbReference type="NCBIfam" id="TIGR00239">
    <property type="entry name" value="2oxo_dh_E1"/>
    <property type="match status" value="1"/>
</dbReference>
<dbReference type="NCBIfam" id="NF006914">
    <property type="entry name" value="PRK09404.1"/>
    <property type="match status" value="1"/>
</dbReference>
<dbReference type="NCBIfam" id="NF008907">
    <property type="entry name" value="PRK12270.1"/>
    <property type="match status" value="1"/>
</dbReference>
<dbReference type="PANTHER" id="PTHR23152:SF4">
    <property type="entry name" value="2-OXOADIPATE DEHYDROGENASE COMPLEX COMPONENT E1"/>
    <property type="match status" value="1"/>
</dbReference>
<dbReference type="PANTHER" id="PTHR23152">
    <property type="entry name" value="2-OXOGLUTARATE DEHYDROGENASE"/>
    <property type="match status" value="1"/>
</dbReference>
<dbReference type="Pfam" id="PF16078">
    <property type="entry name" value="2-oxogl_dehyd_N"/>
    <property type="match status" value="1"/>
</dbReference>
<dbReference type="Pfam" id="PF00676">
    <property type="entry name" value="E1_dh"/>
    <property type="match status" value="1"/>
</dbReference>
<dbReference type="Pfam" id="PF16870">
    <property type="entry name" value="OxoGdeHyase_C"/>
    <property type="match status" value="1"/>
</dbReference>
<dbReference type="Pfam" id="PF02779">
    <property type="entry name" value="Transket_pyr"/>
    <property type="match status" value="1"/>
</dbReference>
<dbReference type="PIRSF" id="PIRSF000157">
    <property type="entry name" value="Oxoglu_dh_E1"/>
    <property type="match status" value="1"/>
</dbReference>
<dbReference type="SMART" id="SM00861">
    <property type="entry name" value="Transket_pyr"/>
    <property type="match status" value="1"/>
</dbReference>
<dbReference type="SUPFAM" id="SSF52518">
    <property type="entry name" value="Thiamin diphosphate-binding fold (THDP-binding)"/>
    <property type="match status" value="2"/>
</dbReference>
<comment type="function">
    <text evidence="1">E1 component of the 2-oxoglutarate dehydrogenase (OGDH) complex which catalyzes the decarboxylation of 2-oxoglutarate, the first step in the conversion of 2-oxoglutarate to succinyl-CoA and CO(2).</text>
</comment>
<comment type="catalytic activity">
    <reaction evidence="1">
        <text>N(6)-[(R)-lipoyl]-L-lysyl-[protein] + 2-oxoglutarate + H(+) = N(6)-[(R)-S(8)-succinyldihydrolipoyl]-L-lysyl-[protein] + CO2</text>
        <dbReference type="Rhea" id="RHEA:12188"/>
        <dbReference type="Rhea" id="RHEA-COMP:10474"/>
        <dbReference type="Rhea" id="RHEA-COMP:20092"/>
        <dbReference type="ChEBI" id="CHEBI:15378"/>
        <dbReference type="ChEBI" id="CHEBI:16526"/>
        <dbReference type="ChEBI" id="CHEBI:16810"/>
        <dbReference type="ChEBI" id="CHEBI:83099"/>
        <dbReference type="ChEBI" id="CHEBI:83120"/>
        <dbReference type="EC" id="1.2.4.2"/>
    </reaction>
    <physiologicalReaction direction="left-to-right" evidence="1">
        <dbReference type="Rhea" id="RHEA:12189"/>
    </physiologicalReaction>
</comment>
<comment type="cofactor">
    <cofactor evidence="4">
        <name>thiamine diphosphate</name>
        <dbReference type="ChEBI" id="CHEBI:58937"/>
    </cofactor>
</comment>
<comment type="activity regulation">
    <text evidence="1">Inhibited by oxaloacetate.</text>
</comment>
<comment type="subunit">
    <text evidence="1 4">Homodimer (PubMed:17367808). Part of the 2-oxoglutarate dehydrogenase (OGDH) complex composed of E1 (2-oxoglutarate dehydrogenase), E2 (dihydrolipoamide succinyltransferase) and E3 (dihydrolipoamide dehydrogenase); the complex contains multiple copies of the three enzymatic components (E1, E2 and E3) (Probable). Interacts (via N-terminus) with SucB, the E2 component of OGDH complex (PubMed:17367808).</text>
</comment>
<comment type="interaction">
    <interactant intactId="EBI-543523">
        <id>P0AFG3</id>
    </interactant>
    <interactant intactId="EBI-543523">
        <id>P0AFG3</id>
        <label>sucA</label>
    </interactant>
    <organismsDiffer>false</organismsDiffer>
    <experiments>2</experiments>
</comment>
<comment type="interaction">
    <interactant intactId="EBI-543523">
        <id>P0AFG3</id>
    </interactant>
    <interactant intactId="EBI-558621">
        <id>P0AFG6</id>
        <label>sucB</label>
    </interactant>
    <organismsDiffer>false</organismsDiffer>
    <experiments>7</experiments>
</comment>
<comment type="interaction">
    <interactant intactId="EBI-543523">
        <id>P0AFG3</id>
    </interactant>
    <interactant intactId="EBI-561198">
        <id>P63389</id>
        <label>yheS</label>
    </interactant>
    <organismsDiffer>false</organismsDiffer>
    <experiments>3</experiments>
</comment>
<comment type="disruption phenotype">
    <text evidence="1">Impaired growth in minimal medium containing acetate as the sole carbon source.</text>
</comment>
<comment type="miscellaneous">
    <text evidence="1">Binds AMP; however it is not clear if the binding is physiologically relevant.</text>
</comment>
<comment type="similarity">
    <text evidence="3">Belongs to the alpha-ketoglutarate dehydrogenase family.</text>
</comment>
<protein>
    <recommendedName>
        <fullName>2-oxoglutarate dehydrogenase E1 component</fullName>
        <ecNumber evidence="1">1.2.4.2</ecNumber>
    </recommendedName>
    <alternativeName>
        <fullName>Alpha-ketoglutarate dehydrogenase</fullName>
    </alternativeName>
</protein>
<accession>P0AFG3</accession>
<accession>P07015</accession>
<accession>P78225</accession>
<reference key="1">
    <citation type="journal article" date="1984" name="Eur. J. Biochem.">
        <title>Nucleotide sequence of the sucA gene encoding the 2-oxoglutarate dehydrogenase of Escherichia coli K12.</title>
        <authorList>
            <person name="Darlison M.G."/>
            <person name="Spencer M.E."/>
            <person name="Guest J.R."/>
        </authorList>
    </citation>
    <scope>NUCLEOTIDE SEQUENCE [GENOMIC DNA]</scope>
    <source>
        <strain>K12</strain>
    </source>
</reference>
<reference key="2">
    <citation type="journal article" date="1996" name="DNA Res.">
        <title>A 718-kb DNA sequence of the Escherichia coli K-12 genome corresponding to the 12.7-28.0 min region on the linkage map.</title>
        <authorList>
            <person name="Oshima T."/>
            <person name="Aiba H."/>
            <person name="Baba T."/>
            <person name="Fujita K."/>
            <person name="Hayashi K."/>
            <person name="Honjo A."/>
            <person name="Ikemoto K."/>
            <person name="Inada T."/>
            <person name="Itoh T."/>
            <person name="Kajihara M."/>
            <person name="Kanai K."/>
            <person name="Kashimoto K."/>
            <person name="Kimura S."/>
            <person name="Kitagawa M."/>
            <person name="Makino K."/>
            <person name="Masuda S."/>
            <person name="Miki T."/>
            <person name="Mizobuchi K."/>
            <person name="Mori H."/>
            <person name="Motomura K."/>
            <person name="Nakamura Y."/>
            <person name="Nashimoto H."/>
            <person name="Nishio Y."/>
            <person name="Saito N."/>
            <person name="Sampei G."/>
            <person name="Seki Y."/>
            <person name="Tagami H."/>
            <person name="Takemoto K."/>
            <person name="Wada C."/>
            <person name="Yamamoto Y."/>
            <person name="Yano M."/>
            <person name="Horiuchi T."/>
        </authorList>
    </citation>
    <scope>NUCLEOTIDE SEQUENCE [LARGE SCALE GENOMIC DNA]</scope>
    <source>
        <strain>K12 / W3110 / ATCC 27325 / DSM 5911</strain>
    </source>
</reference>
<reference key="3">
    <citation type="journal article" date="1997" name="Science">
        <title>The complete genome sequence of Escherichia coli K-12.</title>
        <authorList>
            <person name="Blattner F.R."/>
            <person name="Plunkett G. III"/>
            <person name="Bloch C.A."/>
            <person name="Perna N.T."/>
            <person name="Burland V."/>
            <person name="Riley M."/>
            <person name="Collado-Vides J."/>
            <person name="Glasner J.D."/>
            <person name="Rode C.K."/>
            <person name="Mayhew G.F."/>
            <person name="Gregor J."/>
            <person name="Davis N.W."/>
            <person name="Kirkpatrick H.A."/>
            <person name="Goeden M.A."/>
            <person name="Rose D.J."/>
            <person name="Mau B."/>
            <person name="Shao Y."/>
        </authorList>
    </citation>
    <scope>NUCLEOTIDE SEQUENCE [LARGE SCALE GENOMIC DNA]</scope>
    <source>
        <strain>K12 / MG1655 / ATCC 47076</strain>
    </source>
</reference>
<reference key="4">
    <citation type="journal article" date="2006" name="Mol. Syst. Biol.">
        <title>Highly accurate genome sequences of Escherichia coli K-12 strains MG1655 and W3110.</title>
        <authorList>
            <person name="Hayashi K."/>
            <person name="Morooka N."/>
            <person name="Yamamoto Y."/>
            <person name="Fujita K."/>
            <person name="Isono K."/>
            <person name="Choi S."/>
            <person name="Ohtsubo E."/>
            <person name="Baba T."/>
            <person name="Wanner B.L."/>
            <person name="Mori H."/>
            <person name="Horiuchi T."/>
        </authorList>
    </citation>
    <scope>NUCLEOTIDE SEQUENCE [LARGE SCALE GENOMIC DNA]</scope>
    <source>
        <strain>K12 / W3110 / ATCC 27325 / DSM 5911</strain>
    </source>
</reference>
<reference key="5">
    <citation type="journal article" date="1997" name="Electrophoresis">
        <title>Escherichia coli proteome analysis using the gene-protein database.</title>
        <authorList>
            <person name="VanBogelen R.A."/>
            <person name="Abshire K.Z."/>
            <person name="Moldover B."/>
            <person name="Olson E.R."/>
            <person name="Neidhardt F.C."/>
        </authorList>
    </citation>
    <scope>IDENTIFICATION BY 2D-GEL</scope>
</reference>
<reference key="6">
    <citation type="journal article" date="2018" name="Cell">
        <title>Protein AMPylation by an Evolutionarily Conserved Pseudokinase.</title>
        <authorList>
            <person name="Sreelatha A."/>
            <person name="Yee S.S."/>
            <person name="Lopez V.A."/>
            <person name="Park B.C."/>
            <person name="Kinch L.N."/>
            <person name="Pilch S."/>
            <person name="Servage K.A."/>
            <person name="Zhang J."/>
            <person name="Jiou J."/>
            <person name="Karasiewicz-Urbanska M."/>
            <person name="Lobocka M."/>
            <person name="Grishin N.V."/>
            <person name="Orth K."/>
            <person name="Kucharczyk R."/>
            <person name="Pawlowski K."/>
            <person name="Tomchick D.R."/>
            <person name="Tagliabracci V.S."/>
        </authorList>
    </citation>
    <scope>AMPYLATION AT THR-405</scope>
    <scope>MUTAGENESIS OF SER-404 AND THR-405</scope>
</reference>
<reference key="7">
    <citation type="journal article" date="2007" name="J. Mol. Biol.">
        <title>Crystal structure of the E1 component of the Escherichia coli 2-oxoglutarate dehydrogenase multienzyme complex.</title>
        <authorList>
            <person name="Frank R.A."/>
            <person name="Price A.J."/>
            <person name="Northrop F.D."/>
            <person name="Perham R.N."/>
            <person name="Luisi B.F."/>
        </authorList>
    </citation>
    <scope>X-RAY CRYSTALLOGRAPHY (2.60 ANGSTROMS)</scope>
    <scope>FUNCTION</scope>
    <scope>CATALYTIC ACTIVITY</scope>
    <scope>COFACTOR</scope>
    <scope>ACTIVITY REGULATION</scope>
    <scope>SUBUNIT</scope>
    <scope>INTERACTION WITH SUCB</scope>
    <scope>DISRUPTION PHENOTYPE</scope>
    <scope>MUTAGENESIS OF HIS-260; HIS-298; HIS-313; ARG-337; TRP-533 AND ARG-710</scope>
</reference>